<organism>
    <name type="scientific">Petunia hybrida</name>
    <name type="common">Petunia</name>
    <dbReference type="NCBI Taxonomy" id="4102"/>
    <lineage>
        <taxon>Eukaryota</taxon>
        <taxon>Viridiplantae</taxon>
        <taxon>Streptophyta</taxon>
        <taxon>Embryophyta</taxon>
        <taxon>Tracheophyta</taxon>
        <taxon>Spermatophyta</taxon>
        <taxon>Magnoliopsida</taxon>
        <taxon>eudicotyledons</taxon>
        <taxon>Gunneridae</taxon>
        <taxon>Pentapetalae</taxon>
        <taxon>asterids</taxon>
        <taxon>lamiids</taxon>
        <taxon>Solanales</taxon>
        <taxon>Solanaceae</taxon>
        <taxon>Petunioideae</taxon>
        <taxon>Petunia</taxon>
    </lineage>
</organism>
<comment type="function">
    <text evidence="1">Probably participates in a plant defense mechanism.</text>
</comment>
<comment type="tissue specificity">
    <text evidence="4">Expressed in midvein, lamina and periphery of leaves (at protein level).</text>
</comment>
<comment type="domain">
    <text evidence="4">The presence of a 'disulfide through disulfide knot' structurally defines this protein as a knottin.</text>
</comment>
<comment type="PTM">
    <text evidence="4">Contains 3 disulfide bonds.</text>
</comment>
<comment type="mass spectrometry"/>
<comment type="similarity">
    <text evidence="2">Belongs to the cyclotide family. Bracelet subfamily.</text>
</comment>
<comment type="caution">
    <text evidence="6">This peptide is linear but closely related to cyclotides. Since in UniProtKB the primary structure is preferred to classify proteins, the sequence is assigned to the cyclotide family.</text>
</comment>
<reference evidence="6" key="1">
    <citation type="journal article" date="2010" name="Plant J.">
        <title>Phosphate systemically inhibits development of arbuscular mycorrhiza in Petunia hybrida and represses genes involved in mycorrhizal functioning.</title>
        <authorList>
            <person name="Breuillin F."/>
            <person name="Schramm J."/>
            <person name="Hajirezaei M."/>
            <person name="Ahkami A."/>
            <person name="Favre P."/>
            <person name="Druege U."/>
            <person name="Hause B."/>
            <person name="Bucher M."/>
            <person name="Kretzschmar T."/>
            <person name="Bossolini E."/>
            <person name="Kuhlemeier C."/>
            <person name="Martinoia E."/>
            <person name="Franken P."/>
            <person name="Scholz U."/>
            <person name="Reinhardt D."/>
        </authorList>
    </citation>
    <scope>NUCLEOTIDE SEQUENCE [MRNA]</scope>
    <source>
        <tissue evidence="3">Root</tissue>
    </source>
</reference>
<reference evidence="6" key="2">
    <citation type="journal article" date="2012" name="J. Biol. Chem.">
        <title>Cyclotides associate with leaf vasculature and are the products of a novel precursor in Petunia (Solanaceae).</title>
        <authorList>
            <person name="Poth A.G."/>
            <person name="Mylne J.S."/>
            <person name="Grassl J."/>
            <person name="Lyons R.E."/>
            <person name="Millar A.H."/>
            <person name="Colgrave M.L."/>
            <person name="Craik D.J."/>
        </authorList>
    </citation>
    <scope>PROTEIN SEQUENCE OF 44-74</scope>
    <scope>TISSUE SPECIFICITY</scope>
    <scope>DOMAIN</scope>
    <scope>DISULFIDE BONDS</scope>
    <scope>MASS SPECTROMETRY</scope>
    <source>
        <tissue evidence="4">Root</tissue>
    </source>
</reference>
<keyword id="KW-0903">Direct protein sequencing</keyword>
<keyword id="KW-1015">Disulfide bond</keyword>
<keyword id="KW-0960">Knottin</keyword>
<keyword id="KW-0611">Plant defense</keyword>
<keyword id="KW-0732">Signal</keyword>
<evidence type="ECO:0000250" key="1">
    <source>
        <dbReference type="UniProtKB" id="P56254"/>
    </source>
</evidence>
<evidence type="ECO:0000255" key="2"/>
<evidence type="ECO:0000269" key="3">
    <source>
    </source>
</evidence>
<evidence type="ECO:0000269" key="4">
    <source>
    </source>
</evidence>
<evidence type="ECO:0000303" key="5">
    <source>
    </source>
</evidence>
<evidence type="ECO:0000305" key="6"/>
<sequence>MARVNSLKCALCFIVLILFVQLNCIPETRVMAVELSRVFLQTSSTDCGEPCVYIPCTITALLGCSCLNKVCVRP</sequence>
<feature type="signal peptide" evidence="2">
    <location>
        <begin position="1"/>
        <end position="24"/>
    </location>
</feature>
<feature type="propeptide" id="PRO_0000419339" evidence="2 4">
    <location>
        <begin position="25"/>
        <end position="43"/>
    </location>
</feature>
<feature type="peptide" id="PRO_0000419340" description="Acyclotide phyb-K" evidence="4">
    <location>
        <begin position="44"/>
        <end position="74"/>
    </location>
</feature>
<feature type="disulfide bond" evidence="1">
    <location>
        <begin position="47"/>
        <end position="64"/>
    </location>
</feature>
<feature type="disulfide bond" evidence="1">
    <location>
        <begin position="51"/>
        <end position="66"/>
    </location>
</feature>
<feature type="disulfide bond" evidence="1">
    <location>
        <begin position="56"/>
        <end position="71"/>
    </location>
</feature>
<name>CYCK_PETHY</name>
<protein>
    <recommendedName>
        <fullName evidence="5">Acyclotide phyb-K</fullName>
    </recommendedName>
</protein>
<proteinExistence type="evidence at protein level"/>
<accession>B3EWH6</accession>
<dbReference type="EMBL" id="FN001318">
    <property type="status" value="NOT_ANNOTATED_CDS"/>
    <property type="molecule type" value="mRNA"/>
</dbReference>
<dbReference type="SMR" id="B3EWH6"/>
<dbReference type="GO" id="GO:0006952">
    <property type="term" value="P:defense response"/>
    <property type="evidence" value="ECO:0007669"/>
    <property type="project" value="UniProtKB-KW"/>
</dbReference>
<dbReference type="InterPro" id="IPR005535">
    <property type="entry name" value="Cyclotide"/>
</dbReference>
<dbReference type="InterPro" id="IPR036146">
    <property type="entry name" value="Cyclotide_sf"/>
</dbReference>
<dbReference type="Pfam" id="PF03784">
    <property type="entry name" value="Cyclotide"/>
    <property type="match status" value="1"/>
</dbReference>
<dbReference type="SUPFAM" id="SSF57038">
    <property type="entry name" value="Cyclotides"/>
    <property type="match status" value="1"/>
</dbReference>